<accession>P49054</accession>
<name>PAM_STRPY</name>
<evidence type="ECO:0000255" key="1"/>
<evidence type="ECO:0000255" key="2">
    <source>
        <dbReference type="PROSITE-ProRule" id="PRU00477"/>
    </source>
</evidence>
<evidence type="ECO:0000255" key="3">
    <source>
        <dbReference type="PROSITE-ProRule" id="PRU01372"/>
    </source>
</evidence>
<evidence type="ECO:0000255" key="4">
    <source>
        <dbReference type="PROSITE-ProRule" id="PRU01374"/>
    </source>
</evidence>
<evidence type="ECO:0000256" key="5">
    <source>
        <dbReference type="SAM" id="MobiDB-lite"/>
    </source>
</evidence>
<evidence type="ECO:0000269" key="6">
    <source>
    </source>
</evidence>
<evidence type="ECO:0000305" key="7"/>
<evidence type="ECO:0007829" key="8">
    <source>
        <dbReference type="PDB" id="6OG4"/>
    </source>
</evidence>
<evidence type="ECO:0007829" key="9">
    <source>
        <dbReference type="PDB" id="6OKX"/>
    </source>
</evidence>
<evidence type="ECO:0007829" key="10">
    <source>
        <dbReference type="PDB" id="6OKY"/>
    </source>
</evidence>
<feature type="signal peptide" evidence="1">
    <location>
        <begin position="1" status="less than"/>
        <end position="29"/>
    </location>
</feature>
<feature type="chain" id="PRO_0000005647" description="Plasminogen-binding group A streptococcal M-like protein PAM">
    <location>
        <begin position="30"/>
        <end position="384"/>
    </location>
</feature>
<feature type="propeptide" id="PRO_0000005648" description="Removed by sortase" evidence="2">
    <location>
        <begin position="385"/>
        <end position="388" status="greater than"/>
    </location>
</feature>
<feature type="repeat" description="A-1">
    <location>
        <begin position="91"/>
        <end position="103"/>
    </location>
</feature>
<feature type="repeat" description="A-2">
    <location>
        <begin position="104"/>
        <end position="116"/>
    </location>
</feature>
<feature type="repeat" description="B-1">
    <location>
        <begin position="147"/>
        <end position="153"/>
    </location>
</feature>
<feature type="repeat" description="B-2">
    <location>
        <begin position="154"/>
        <end position="159"/>
    </location>
</feature>
<feature type="repeat" description="C 1" evidence="3">
    <location>
        <begin position="160"/>
        <end position="194"/>
    </location>
</feature>
<feature type="repeat" description="C 2" evidence="3">
    <location>
        <begin position="202"/>
        <end position="236"/>
    </location>
</feature>
<feature type="repeat" description="C 3" evidence="3">
    <location>
        <begin position="244"/>
        <end position="278"/>
    </location>
</feature>
<feature type="repeat" description="D 1" evidence="4">
    <location>
        <begin position="311"/>
        <end position="316"/>
    </location>
</feature>
<feature type="repeat" description="D 2" evidence="4">
    <location>
        <begin position="317"/>
        <end position="322"/>
    </location>
</feature>
<feature type="repeat" description="D 3" evidence="4">
    <location>
        <begin position="325"/>
        <end position="330"/>
    </location>
</feature>
<feature type="repeat" description="D 4" evidence="4">
    <location>
        <begin position="332"/>
        <end position="337"/>
    </location>
</feature>
<feature type="region of interest" description="Able to bind plasminogen">
    <location>
        <begin position="85"/>
        <end position="113"/>
    </location>
</feature>
<feature type="region of interest" description="2 X approximate tandem repeats, type a">
    <location>
        <begin position="91"/>
        <end position="116"/>
    </location>
</feature>
<feature type="region of interest" description="Disordered" evidence="5">
    <location>
        <begin position="95"/>
        <end position="189"/>
    </location>
</feature>
<feature type="region of interest" description="2 X tandem repeats, type b">
    <location>
        <begin position="147"/>
        <end position="161"/>
    </location>
</feature>
<feature type="region of interest" description="Disordered" evidence="5">
    <location>
        <begin position="204"/>
        <end position="231"/>
    </location>
</feature>
<feature type="region of interest" description="Disordered" evidence="5">
    <location>
        <begin position="248"/>
        <end position="269"/>
    </location>
</feature>
<feature type="region of interest" description="Disordered" evidence="5">
    <location>
        <begin position="331"/>
        <end position="388"/>
    </location>
</feature>
<feature type="short sequence motif" description="LPXTG sorting signal" evidence="2">
    <location>
        <begin position="381"/>
        <end position="385"/>
    </location>
</feature>
<feature type="compositionally biased region" description="Basic and acidic residues" evidence="5">
    <location>
        <begin position="95"/>
        <end position="137"/>
    </location>
</feature>
<feature type="compositionally biased region" description="Basic and acidic residues" evidence="5">
    <location>
        <begin position="145"/>
        <end position="168"/>
    </location>
</feature>
<feature type="compositionally biased region" description="Basic and acidic residues" evidence="5">
    <location>
        <begin position="176"/>
        <end position="189"/>
    </location>
</feature>
<feature type="compositionally biased region" description="Basic and acidic residues" evidence="5">
    <location>
        <begin position="218"/>
        <end position="231"/>
    </location>
</feature>
<feature type="compositionally biased region" description="Basic and acidic residues" evidence="5">
    <location>
        <begin position="260"/>
        <end position="269"/>
    </location>
</feature>
<feature type="compositionally biased region" description="Basic and acidic residues" evidence="5">
    <location>
        <begin position="331"/>
        <end position="340"/>
    </location>
</feature>
<feature type="modified residue" description="Pentaglycyl murein peptidoglycan amidated threonine" evidence="2">
    <location>
        <position position="384"/>
    </location>
</feature>
<feature type="mutagenesis site" description="No change in plasminogen binding." evidence="6">
    <original>K</original>
    <variation>A</variation>
    <location>
        <position position="82"/>
    </location>
</feature>
<feature type="mutagenesis site" description="50-fold decrease in plasminogen binding." evidence="6">
    <original>K</original>
    <variation>A</variation>
    <location>
        <position position="98"/>
    </location>
</feature>
<feature type="mutagenesis site" description="2-fold decrease in plasminogen binding." evidence="6">
    <original>K</original>
    <variation>A</variation>
    <location>
        <position position="111"/>
    </location>
</feature>
<feature type="non-terminal residue">
    <location>
        <position position="1"/>
    </location>
</feature>
<feature type="non-terminal residue">
    <location>
        <position position="388"/>
    </location>
</feature>
<feature type="helix" evidence="10">
    <location>
        <begin position="86"/>
        <end position="88"/>
    </location>
</feature>
<feature type="helix" evidence="8">
    <location>
        <begin position="90"/>
        <end position="121"/>
    </location>
</feature>
<feature type="helix" evidence="9">
    <location>
        <begin position="126"/>
        <end position="128"/>
    </location>
</feature>
<feature type="turn" evidence="10">
    <location>
        <begin position="130"/>
        <end position="133"/>
    </location>
</feature>
<organism>
    <name type="scientific">Streptococcus pyogenes</name>
    <dbReference type="NCBI Taxonomy" id="1314"/>
    <lineage>
        <taxon>Bacteria</taxon>
        <taxon>Bacillati</taxon>
        <taxon>Bacillota</taxon>
        <taxon>Bacilli</taxon>
        <taxon>Lactobacillales</taxon>
        <taxon>Streptococcaceae</taxon>
        <taxon>Streptococcus</taxon>
    </lineage>
</organism>
<proteinExistence type="evidence at protein level"/>
<protein>
    <recommendedName>
        <fullName>Plasminogen-binding group A streptococcal M-like protein PAM</fullName>
    </recommendedName>
</protein>
<gene>
    <name type="primary">pam</name>
    <name type="synonym">emm</name>
</gene>
<reference key="1">
    <citation type="journal article" date="1993" name="J. Biol. Chem.">
        <title>PAM, a novel plasminogen-binding protein from Streptococcus pyogenes.</title>
        <authorList>
            <person name="Berge A."/>
            <person name="Sjoebring U."/>
        </authorList>
    </citation>
    <scope>NUCLEOTIDE SEQUENCE [GENOMIC DNA]</scope>
    <scope>PROTEIN SEQUENCE OF 32-41</scope>
    <source>
        <strain>AP53 / Serotype M53</strain>
    </source>
</reference>
<reference key="2">
    <citation type="journal article" date="1995" name="Mol. Microbiol.">
        <title>Identification of a plasminogen-binding motif in PAM, a bacterial surface protein.</title>
        <authorList>
            <person name="Carlsson Wistedt A."/>
            <person name="Ringdahl U."/>
            <person name="Mueller-Esterl W."/>
            <person name="Sjoebring U."/>
        </authorList>
    </citation>
    <scope>CHARACTERIZATION OF PLASMINOGEN BINDING</scope>
    <scope>MUTAGENESIS</scope>
    <source>
        <strain>AP53 / Serotype M53</strain>
    </source>
</reference>
<comment type="function">
    <text>Binds to human plasminogen (and plasmin) via its kringle repeats. Also binds to albumin, immunoglobulin G and fibrinogen. Could provide the bacteria with a mechanism for invasion, as streptococcal-bound plasmin could permit tissue penetration.</text>
</comment>
<comment type="subcellular location">
    <subcellularLocation>
        <location evidence="2">Secreted</location>
        <location evidence="2">Cell wall</location>
        <topology evidence="2">Peptidoglycan-anchor</topology>
    </subcellularLocation>
</comment>
<comment type="miscellaneous">
    <text>PAM has more than one binding site for plasminogen; it is thought that each of the a-repeats can bind one plasminogen molecule.</text>
</comment>
<comment type="similarity">
    <text evidence="7">Belongs to the M protein family.</text>
</comment>
<keyword id="KW-0002">3D-structure</keyword>
<keyword id="KW-0134">Cell wall</keyword>
<keyword id="KW-0903">Direct protein sequencing</keyword>
<keyword id="KW-0572">Peptidoglycan-anchor</keyword>
<keyword id="KW-0677">Repeat</keyword>
<keyword id="KW-0964">Secreted</keyword>
<keyword id="KW-0732">Signal</keyword>
<dbReference type="EMBL" id="Z22219">
    <property type="protein sequence ID" value="CAA80222.1"/>
    <property type="molecule type" value="Genomic_DNA"/>
</dbReference>
<dbReference type="PIR" id="A49545">
    <property type="entry name" value="A49545"/>
</dbReference>
<dbReference type="PDB" id="1I5K">
    <property type="method" value="X-ray"/>
    <property type="resolution" value="2.70 A"/>
    <property type="chains" value="C/D=85-113"/>
</dbReference>
<dbReference type="PDB" id="2DOH">
    <property type="method" value="X-ray"/>
    <property type="resolution" value="2.30 A"/>
    <property type="chains" value="C=85-113"/>
</dbReference>
<dbReference type="PDB" id="2DOI">
    <property type="method" value="X-ray"/>
    <property type="resolution" value="3.10 A"/>
    <property type="chains" value="B/C=85-113"/>
</dbReference>
<dbReference type="PDB" id="6OG4">
    <property type="method" value="X-ray"/>
    <property type="resolution" value="1.70 A"/>
    <property type="chains" value="C=76-150"/>
</dbReference>
<dbReference type="PDB" id="6OKW">
    <property type="method" value="NMR"/>
    <property type="chains" value="A=85-133"/>
</dbReference>
<dbReference type="PDB" id="6OKX">
    <property type="method" value="NMR"/>
    <property type="chains" value="A=85-133"/>
</dbReference>
<dbReference type="PDB" id="6OKY">
    <property type="method" value="NMR"/>
    <property type="chains" value="A=85-133"/>
</dbReference>
<dbReference type="PDB" id="6OQ9">
    <property type="method" value="NMR"/>
    <property type="chains" value="A=85-133"/>
</dbReference>
<dbReference type="PDB" id="6OQJ">
    <property type="method" value="NMR"/>
    <property type="chains" value="B=85-133"/>
</dbReference>
<dbReference type="PDB" id="6OQK">
    <property type="method" value="NMR"/>
    <property type="chains" value="B=85-133"/>
</dbReference>
<dbReference type="PDB" id="8TVL">
    <property type="method" value="EM"/>
    <property type="resolution" value="3.80 A"/>
    <property type="chains" value="A=30-385"/>
</dbReference>
<dbReference type="PDBsum" id="1I5K"/>
<dbReference type="PDBsum" id="2DOH"/>
<dbReference type="PDBsum" id="2DOI"/>
<dbReference type="PDBsum" id="6OG4"/>
<dbReference type="PDBsum" id="6OKW"/>
<dbReference type="PDBsum" id="6OKX"/>
<dbReference type="PDBsum" id="6OKY"/>
<dbReference type="PDBsum" id="6OQ9"/>
<dbReference type="PDBsum" id="6OQJ"/>
<dbReference type="PDBsum" id="6OQK"/>
<dbReference type="PDBsum" id="8TVL"/>
<dbReference type="BMRB" id="P49054"/>
<dbReference type="EMDB" id="EMD-42429"/>
<dbReference type="SMR" id="P49054"/>
<dbReference type="EvolutionaryTrace" id="P49054"/>
<dbReference type="GO" id="GO:0005576">
    <property type="term" value="C:extracellular region"/>
    <property type="evidence" value="ECO:0007669"/>
    <property type="project" value="UniProtKB-KW"/>
</dbReference>
<dbReference type="GO" id="GO:0031639">
    <property type="term" value="P:plasminogen activation"/>
    <property type="evidence" value="ECO:0000314"/>
    <property type="project" value="CACAO"/>
</dbReference>
<dbReference type="Gene3D" id="6.10.250.460">
    <property type="match status" value="3"/>
</dbReference>
<dbReference type="InterPro" id="IPR021965">
    <property type="entry name" value="Plasminogen_ligand_VEK-30"/>
</dbReference>
<dbReference type="InterPro" id="IPR049896">
    <property type="entry name" value="SMCR"/>
</dbReference>
<dbReference type="InterPro" id="IPR049895">
    <property type="entry name" value="SMDRR"/>
</dbReference>
<dbReference type="InterPro" id="IPR005877">
    <property type="entry name" value="YSIRK_signal_dom"/>
</dbReference>
<dbReference type="NCBIfam" id="TIGR01168">
    <property type="entry name" value="YSIRK_signal"/>
    <property type="match status" value="1"/>
</dbReference>
<dbReference type="Pfam" id="PF12107">
    <property type="entry name" value="VEK-30"/>
    <property type="match status" value="2"/>
</dbReference>
<dbReference type="PROSITE" id="PS52028">
    <property type="entry name" value="SMCR"/>
    <property type="match status" value="3"/>
</dbReference>
<dbReference type="PROSITE" id="PS52030">
    <property type="entry name" value="SMDRR"/>
    <property type="match status" value="1"/>
</dbReference>
<sequence>RKLKTGTASVAVALTVVGAGLASQTEVKANRADDARNEVLRGNLVRAELWYRQIQENDQLKLENKGLKTDLREKEEELQGLKDDVEKLTADAELQRLKNERHEEAELERLKSERHDHDKKEAERKALEDKLADKQEHLNGALRYINEKEAEAKEKEAEQKKLKEEKQISDASRQGLRRDLDASREAKKQVEKDLANLTAELDKVKEEKQISDASRQGLRRDLDASREAKKQVEKGLANLTAELDKVKEEKQISDASRQGLRRDLDASREAKKQVEKALEEANSKLAALEKLNKELEESKKLTEKEKAELQAKLEAEAKALKEQLAKQAEELAKLRAEKASDSQTPDAKPGNKAVPGKGQAPQAGTKPNQNKAPMKETKRQLPSTGETT</sequence>